<keyword id="KW-0028">Amino-acid biosynthesis</keyword>
<keyword id="KW-0963">Cytoplasm</keyword>
<keyword id="KW-0368">Histidine biosynthesis</keyword>
<keyword id="KW-0413">Isomerase</keyword>
<keyword id="KW-1185">Reference proteome</keyword>
<accession>Q494D7</accession>
<name>HIS4_BLOPB</name>
<comment type="catalytic activity">
    <reaction evidence="1">
        <text>1-(5-phospho-beta-D-ribosyl)-5-[(5-phospho-beta-D-ribosylamino)methylideneamino]imidazole-4-carboxamide = 5-[(5-phospho-1-deoxy-D-ribulos-1-ylimino)methylamino]-1-(5-phospho-beta-D-ribosyl)imidazole-4-carboxamide</text>
        <dbReference type="Rhea" id="RHEA:15469"/>
        <dbReference type="ChEBI" id="CHEBI:58435"/>
        <dbReference type="ChEBI" id="CHEBI:58525"/>
        <dbReference type="EC" id="5.3.1.16"/>
    </reaction>
</comment>
<comment type="pathway">
    <text evidence="1">Amino-acid biosynthesis; L-histidine biosynthesis; L-histidine from 5-phospho-alpha-D-ribose 1-diphosphate: step 4/9.</text>
</comment>
<comment type="subcellular location">
    <subcellularLocation>
        <location evidence="1">Cytoplasm</location>
    </subcellularLocation>
</comment>
<comment type="similarity">
    <text evidence="1">Belongs to the HisA/HisF family.</text>
</comment>
<sequence length="246" mass="27442">MIIPALDIINGNIVRLYQGSYCMQTNYGEPISLLKEYIRQGAKMIHLVDLDGAKNPLKRQSLLISQLIKEANPLSKIQIGGGIRNASDVEILLESGATRIVLGSIAVTQPKIVKKWFEYFDPNTLVLAVDIHVYSEENRKVAIYGWQKETDLQLEQIIEEYYTVGLKHVICTDISKDGTLLGSNISLYRSICHAWPRIAFQSSGGVNKLSEISKLRSSGVAGIIIGRAFLENTFTINEAISCWQNE</sequence>
<reference key="1">
    <citation type="journal article" date="2005" name="Genome Res.">
        <title>Genome sequence of Blochmannia pennsylvanicus indicates parallel evolutionary trends among bacterial mutualists of insects.</title>
        <authorList>
            <person name="Degnan P.H."/>
            <person name="Lazarus A.B."/>
            <person name="Wernegreen J.J."/>
        </authorList>
    </citation>
    <scope>NUCLEOTIDE SEQUENCE [LARGE SCALE GENOMIC DNA]</scope>
    <source>
        <strain>BPEN</strain>
    </source>
</reference>
<organism>
    <name type="scientific">Blochmanniella pennsylvanica (strain BPEN)</name>
    <dbReference type="NCBI Taxonomy" id="291272"/>
    <lineage>
        <taxon>Bacteria</taxon>
        <taxon>Pseudomonadati</taxon>
        <taxon>Pseudomonadota</taxon>
        <taxon>Gammaproteobacteria</taxon>
        <taxon>Enterobacterales</taxon>
        <taxon>Enterobacteriaceae</taxon>
        <taxon>ant endosymbionts</taxon>
        <taxon>Candidatus Blochmanniella</taxon>
    </lineage>
</organism>
<feature type="chain" id="PRO_0000229043" description="1-(5-phosphoribosyl)-5-[(5-phosphoribosylamino)methylideneamino] imidazole-4-carboxamide isomerase">
    <location>
        <begin position="1"/>
        <end position="246"/>
    </location>
</feature>
<feature type="active site" description="Proton acceptor" evidence="1">
    <location>
        <position position="7"/>
    </location>
</feature>
<feature type="active site" description="Proton donor" evidence="1">
    <location>
        <position position="130"/>
    </location>
</feature>
<dbReference type="EC" id="5.3.1.16" evidence="1"/>
<dbReference type="EMBL" id="CP000016">
    <property type="protein sequence ID" value="AAZ41097.1"/>
    <property type="molecule type" value="Genomic_DNA"/>
</dbReference>
<dbReference type="RefSeq" id="WP_011283008.1">
    <property type="nucleotide sequence ID" value="NC_007292.1"/>
</dbReference>
<dbReference type="SMR" id="Q494D7"/>
<dbReference type="STRING" id="291272.BPEN_482"/>
<dbReference type="KEGG" id="bpn:BPEN_482"/>
<dbReference type="eggNOG" id="COG0106">
    <property type="taxonomic scope" value="Bacteria"/>
</dbReference>
<dbReference type="HOGENOM" id="CLU_048577_1_2_6"/>
<dbReference type="OrthoDB" id="9807749at2"/>
<dbReference type="UniPathway" id="UPA00031">
    <property type="reaction ID" value="UER00009"/>
</dbReference>
<dbReference type="Proteomes" id="UP000007794">
    <property type="component" value="Chromosome"/>
</dbReference>
<dbReference type="GO" id="GO:0005737">
    <property type="term" value="C:cytoplasm"/>
    <property type="evidence" value="ECO:0007669"/>
    <property type="project" value="UniProtKB-SubCell"/>
</dbReference>
<dbReference type="GO" id="GO:0003949">
    <property type="term" value="F:1-(5-phosphoribosyl)-5-[(5-phosphoribosylamino)methylideneamino]imidazole-4-carboxamide isomerase activity"/>
    <property type="evidence" value="ECO:0007669"/>
    <property type="project" value="UniProtKB-UniRule"/>
</dbReference>
<dbReference type="GO" id="GO:0000105">
    <property type="term" value="P:L-histidine biosynthetic process"/>
    <property type="evidence" value="ECO:0007669"/>
    <property type="project" value="UniProtKB-UniRule"/>
</dbReference>
<dbReference type="GO" id="GO:0000162">
    <property type="term" value="P:L-tryptophan biosynthetic process"/>
    <property type="evidence" value="ECO:0007669"/>
    <property type="project" value="TreeGrafter"/>
</dbReference>
<dbReference type="CDD" id="cd04732">
    <property type="entry name" value="HisA"/>
    <property type="match status" value="1"/>
</dbReference>
<dbReference type="FunFam" id="3.20.20.70:FF:000009">
    <property type="entry name" value="1-(5-phosphoribosyl)-5-[(5-phosphoribosylamino)methylideneamino] imidazole-4-carboxamide isomerase"/>
    <property type="match status" value="1"/>
</dbReference>
<dbReference type="Gene3D" id="3.20.20.70">
    <property type="entry name" value="Aldolase class I"/>
    <property type="match status" value="1"/>
</dbReference>
<dbReference type="HAMAP" id="MF_01014">
    <property type="entry name" value="HisA"/>
    <property type="match status" value="1"/>
</dbReference>
<dbReference type="InterPro" id="IPR013785">
    <property type="entry name" value="Aldolase_TIM"/>
</dbReference>
<dbReference type="InterPro" id="IPR006062">
    <property type="entry name" value="His_biosynth"/>
</dbReference>
<dbReference type="InterPro" id="IPR006063">
    <property type="entry name" value="HisA_bact_arch"/>
</dbReference>
<dbReference type="InterPro" id="IPR044524">
    <property type="entry name" value="Isoase_HisA-like"/>
</dbReference>
<dbReference type="InterPro" id="IPR023016">
    <property type="entry name" value="Isoase_HisA-like_bact"/>
</dbReference>
<dbReference type="InterPro" id="IPR011060">
    <property type="entry name" value="RibuloseP-bd_barrel"/>
</dbReference>
<dbReference type="NCBIfam" id="TIGR00007">
    <property type="entry name" value="1-(5-phosphoribosyl)-5-[(5-phosphoribosylamino)methylideneamino]imidazole-4-carboxamide isomerase"/>
    <property type="match status" value="1"/>
</dbReference>
<dbReference type="PANTHER" id="PTHR43090">
    <property type="entry name" value="1-(5-PHOSPHORIBOSYL)-5-[(5-PHOSPHORIBOSYLAMINO)METHYLIDENEAMINO] IMIDAZOLE-4-CARBOXAMIDE ISOMERASE"/>
    <property type="match status" value="1"/>
</dbReference>
<dbReference type="PANTHER" id="PTHR43090:SF2">
    <property type="entry name" value="1-(5-PHOSPHORIBOSYL)-5-[(5-PHOSPHORIBOSYLAMINO)METHYLIDENEAMINO] IMIDAZOLE-4-CARBOXAMIDE ISOMERASE"/>
    <property type="match status" value="1"/>
</dbReference>
<dbReference type="Pfam" id="PF00977">
    <property type="entry name" value="His_biosynth"/>
    <property type="match status" value="1"/>
</dbReference>
<dbReference type="SUPFAM" id="SSF51366">
    <property type="entry name" value="Ribulose-phoshate binding barrel"/>
    <property type="match status" value="1"/>
</dbReference>
<protein>
    <recommendedName>
        <fullName evidence="1">1-(5-phosphoribosyl)-5-[(5-phosphoribosylamino)methylideneamino] imidazole-4-carboxamide isomerase</fullName>
        <ecNumber evidence="1">5.3.1.16</ecNumber>
    </recommendedName>
    <alternativeName>
        <fullName evidence="1">Phosphoribosylformimino-5-aminoimidazole carboxamide ribotide isomerase</fullName>
    </alternativeName>
</protein>
<proteinExistence type="inferred from homology"/>
<gene>
    <name evidence="1" type="primary">hisA</name>
    <name type="ordered locus">BPEN_482</name>
</gene>
<evidence type="ECO:0000255" key="1">
    <source>
        <dbReference type="HAMAP-Rule" id="MF_01014"/>
    </source>
</evidence>